<proteinExistence type="evidence at transcript level"/>
<comment type="function">
    <text evidence="2">Involved in the homologous recombination repair (HRR) pathway of double-stranded DNA breaks arising during DNA replication or induced by DNA-damaging agents. Bind to single-stranded DNA (ssDNA) and has DNA-dependent ATPase activity. Part of the RAD51 paralog protein complex BCDX2 which acts in the BRCA1-BRCA2-dependent HR pathway. Upon DNA damage, BCDX2 acts downstream of BRCA2 recruitment and upstream of RAD51 recruitment. BCDX2 binds predominantly to the intersection of the four duplex arms of the Holliday junction and to junction of replication forks. The BCDX2 complex was originally reported to bind single-stranded DNA, single-stranded gaps in duplex DNA and specifically to nicks in duplex DNA. Involved in telomere maintenance. The BCDX2 subcomplex XRCC2:RAD51D can stimulate Holliday junction resolution by BLM (By similarity).</text>
</comment>
<comment type="subunit">
    <text evidence="1">Part of the BCDX2 complex consisting of RAD51B, RAD51C, RAD51D and XRCC2; the complex has a ring-like structure arranged into a flat disc around a central channel. In the absence of DNA, the BCDX2 subcomplex XRCC2:RAD51D formed a multimeric ring structure; in the presence of single-stranded DNA it formed a filamentous structure with the ssDNA. Interacts with SWSAP1 and ZSWIM7; involved in homologous recombination repair. Interacts with BLM; required for stimulation of BLM activity by the BCDX2 subcomplex XRCC2:RAD51D (By similarity).</text>
</comment>
<comment type="subcellular location">
    <subcellularLocation>
        <location evidence="1">Nucleus</location>
    </subcellularLocation>
</comment>
<comment type="similarity">
    <text evidence="4">Belongs to the RecA family. RAD51 subfamily.</text>
</comment>
<protein>
    <recommendedName>
        <fullName>DNA repair protein RAD51 homolog 4</fullName>
    </recommendedName>
    <alternativeName>
        <fullName>R51H3</fullName>
    </alternativeName>
    <alternativeName>
        <fullName>RAD51 homolog D</fullName>
    </alternativeName>
    <alternativeName>
        <fullName>RAD51-like protein 3</fullName>
    </alternativeName>
</protein>
<name>RA51D_BOVIN</name>
<reference key="1">
    <citation type="submission" date="2006-02" db="EMBL/GenBank/DDBJ databases">
        <authorList>
            <consortium name="NIH - Mammalian Gene Collection (MGC) project"/>
        </authorList>
    </citation>
    <scope>NUCLEOTIDE SEQUENCE [LARGE SCALE MRNA]</scope>
    <source>
        <strain>Hereford</strain>
        <tissue>Uterus</tissue>
    </source>
</reference>
<feature type="chain" id="PRO_0000253607" description="DNA repair protein RAD51 homolog 4">
    <location>
        <begin position="1"/>
        <end position="326"/>
    </location>
</feature>
<feature type="region of interest" description="preferentially binds ssDNA" evidence="1">
    <location>
        <begin position="1"/>
        <end position="83"/>
    </location>
</feature>
<feature type="binding site" evidence="3">
    <location>
        <begin position="107"/>
        <end position="114"/>
    </location>
    <ligand>
        <name>ATP</name>
        <dbReference type="ChEBI" id="CHEBI:30616"/>
    </ligand>
</feature>
<accession>Q2HJ51</accession>
<organism>
    <name type="scientific">Bos taurus</name>
    <name type="common">Bovine</name>
    <dbReference type="NCBI Taxonomy" id="9913"/>
    <lineage>
        <taxon>Eukaryota</taxon>
        <taxon>Metazoa</taxon>
        <taxon>Chordata</taxon>
        <taxon>Craniata</taxon>
        <taxon>Vertebrata</taxon>
        <taxon>Euteleostomi</taxon>
        <taxon>Mammalia</taxon>
        <taxon>Eutheria</taxon>
        <taxon>Laurasiatheria</taxon>
        <taxon>Artiodactyla</taxon>
        <taxon>Ruminantia</taxon>
        <taxon>Pecora</taxon>
        <taxon>Bovidae</taxon>
        <taxon>Bovinae</taxon>
        <taxon>Bos</taxon>
    </lineage>
</organism>
<sequence length="326" mass="34651">MGVLRAGLCPGLTQDMVQLLQSRGIKTVVDLVCADLEEVAQKCGLSYKALVALRRVLLAQFSAFPFNGADLYEELKTSTAILSTGIGSLDKLLDAGLYTGEVTEIVGAPGSGKTQVCLCVAAHVAHGLQQNVLYIDSNGGLTASRILQLLQARTPDEEEQAGALQRIQVVRAFDIFQMLDVLQDLRGAVSQQVSSSSGTLKVVVVDSVAAVVAPLLGGQQREGLALMMQLARELKTLARDLSVAVLVTNHMTRDRDSGQLKPALGRSWSFVPSTRLLLDSTQSSGSLGSWRVVCLTKSPRLPTGCQETVDLGSLGTPAFQGDHKGH</sequence>
<evidence type="ECO:0000250" key="1"/>
<evidence type="ECO:0000250" key="2">
    <source>
        <dbReference type="UniProtKB" id="O75771"/>
    </source>
</evidence>
<evidence type="ECO:0000255" key="3"/>
<evidence type="ECO:0000305" key="4"/>
<gene>
    <name type="primary">RAD51D</name>
    <name type="synonym">RAD51L3</name>
</gene>
<dbReference type="EMBL" id="BC113309">
    <property type="protein sequence ID" value="AAI13310.1"/>
    <property type="molecule type" value="mRNA"/>
</dbReference>
<dbReference type="RefSeq" id="NP_001039769.1">
    <property type="nucleotide sequence ID" value="NM_001046304.1"/>
</dbReference>
<dbReference type="SMR" id="Q2HJ51"/>
<dbReference type="FunCoup" id="Q2HJ51">
    <property type="interactions" value="2510"/>
</dbReference>
<dbReference type="STRING" id="9913.ENSBTAP00000074524"/>
<dbReference type="PaxDb" id="9913-ENSBTAP00000025404"/>
<dbReference type="GeneID" id="529507"/>
<dbReference type="KEGG" id="bta:529507"/>
<dbReference type="CTD" id="5892"/>
<dbReference type="VEuPathDB" id="HostDB:ENSBTAG00000019082"/>
<dbReference type="eggNOG" id="KOG1433">
    <property type="taxonomic scope" value="Eukaryota"/>
</dbReference>
<dbReference type="HOGENOM" id="CLU_058452_0_0_1"/>
<dbReference type="InParanoid" id="Q2HJ51"/>
<dbReference type="OrthoDB" id="336321at2759"/>
<dbReference type="TreeFam" id="TF101219"/>
<dbReference type="Reactome" id="R-BTA-5685942">
    <property type="pathway name" value="HDR through Homologous Recombination (HRR)"/>
</dbReference>
<dbReference type="Reactome" id="R-BTA-5693568">
    <property type="pathway name" value="Resolution of D-loop Structures through Holliday Junction Intermediates"/>
</dbReference>
<dbReference type="Reactome" id="R-BTA-5693579">
    <property type="pathway name" value="Homologous DNA Pairing and Strand Exchange"/>
</dbReference>
<dbReference type="Reactome" id="R-BTA-5693616">
    <property type="pathway name" value="Presynaptic phase of homologous DNA pairing and strand exchange"/>
</dbReference>
<dbReference type="Proteomes" id="UP000009136">
    <property type="component" value="Chromosome 19"/>
</dbReference>
<dbReference type="Bgee" id="ENSBTAG00000019082">
    <property type="expression patterns" value="Expressed in semen and 104 other cell types or tissues"/>
</dbReference>
<dbReference type="GO" id="GO:0005813">
    <property type="term" value="C:centrosome"/>
    <property type="evidence" value="ECO:0000250"/>
    <property type="project" value="UniProtKB"/>
</dbReference>
<dbReference type="GO" id="GO:0000781">
    <property type="term" value="C:chromosome, telomeric region"/>
    <property type="evidence" value="ECO:0000250"/>
    <property type="project" value="UniProtKB"/>
</dbReference>
<dbReference type="GO" id="GO:0005815">
    <property type="term" value="C:microtubule organizing center"/>
    <property type="evidence" value="ECO:0000318"/>
    <property type="project" value="GO_Central"/>
</dbReference>
<dbReference type="GO" id="GO:0033063">
    <property type="term" value="C:Rad51B-Rad51C-Rad51D-XRCC2 complex"/>
    <property type="evidence" value="ECO:0000250"/>
    <property type="project" value="UniProtKB"/>
</dbReference>
<dbReference type="GO" id="GO:0005657">
    <property type="term" value="C:replication fork"/>
    <property type="evidence" value="ECO:0000250"/>
    <property type="project" value="UniProtKB"/>
</dbReference>
<dbReference type="GO" id="GO:0005524">
    <property type="term" value="F:ATP binding"/>
    <property type="evidence" value="ECO:0007669"/>
    <property type="project" value="UniProtKB-KW"/>
</dbReference>
<dbReference type="GO" id="GO:0016887">
    <property type="term" value="F:ATP hydrolysis activity"/>
    <property type="evidence" value="ECO:0007669"/>
    <property type="project" value="InterPro"/>
</dbReference>
<dbReference type="GO" id="GO:0008094">
    <property type="term" value="F:ATP-dependent activity, acting on DNA"/>
    <property type="evidence" value="ECO:0000250"/>
    <property type="project" value="UniProtKB"/>
</dbReference>
<dbReference type="GO" id="GO:0140664">
    <property type="term" value="F:ATP-dependent DNA damage sensor activity"/>
    <property type="evidence" value="ECO:0007669"/>
    <property type="project" value="InterPro"/>
</dbReference>
<dbReference type="GO" id="GO:0043015">
    <property type="term" value="F:gamma-tubulin binding"/>
    <property type="evidence" value="ECO:0000250"/>
    <property type="project" value="UniProtKB"/>
</dbReference>
<dbReference type="GO" id="GO:0003697">
    <property type="term" value="F:single-stranded DNA binding"/>
    <property type="evidence" value="ECO:0000250"/>
    <property type="project" value="UniProtKB"/>
</dbReference>
<dbReference type="GO" id="GO:0042148">
    <property type="term" value="P:DNA strand invasion"/>
    <property type="evidence" value="ECO:0000250"/>
    <property type="project" value="UniProtKB"/>
</dbReference>
<dbReference type="GO" id="GO:0000724">
    <property type="term" value="P:double-strand break repair via homologous recombination"/>
    <property type="evidence" value="ECO:0000250"/>
    <property type="project" value="UniProtKB"/>
</dbReference>
<dbReference type="GO" id="GO:0007131">
    <property type="term" value="P:reciprocal meiotic recombination"/>
    <property type="evidence" value="ECO:0000318"/>
    <property type="project" value="GO_Central"/>
</dbReference>
<dbReference type="GO" id="GO:0000723">
    <property type="term" value="P:telomere maintenance"/>
    <property type="evidence" value="ECO:0000250"/>
    <property type="project" value="UniProtKB"/>
</dbReference>
<dbReference type="CDD" id="cd19489">
    <property type="entry name" value="Rad51D"/>
    <property type="match status" value="1"/>
</dbReference>
<dbReference type="FunFam" id="3.40.50.300:FF:001042">
    <property type="entry name" value="DNA repair protein RAD51 homolog 4"/>
    <property type="match status" value="1"/>
</dbReference>
<dbReference type="Gene3D" id="3.40.50.300">
    <property type="entry name" value="P-loop containing nucleotide triphosphate hydrolases"/>
    <property type="match status" value="1"/>
</dbReference>
<dbReference type="InterPro" id="IPR003593">
    <property type="entry name" value="AAA+_ATPase"/>
</dbReference>
<dbReference type="InterPro" id="IPR013632">
    <property type="entry name" value="DNA_recomb/repair_Rad51_C"/>
</dbReference>
<dbReference type="InterPro" id="IPR016467">
    <property type="entry name" value="DNA_recomb/repair_RecA-like"/>
</dbReference>
<dbReference type="InterPro" id="IPR051988">
    <property type="entry name" value="HRR_RAD51_Paralog"/>
</dbReference>
<dbReference type="InterPro" id="IPR027417">
    <property type="entry name" value="P-loop_NTPase"/>
</dbReference>
<dbReference type="InterPro" id="IPR047323">
    <property type="entry name" value="Rad51D_C"/>
</dbReference>
<dbReference type="InterPro" id="IPR048943">
    <property type="entry name" value="RAD51D_N"/>
</dbReference>
<dbReference type="InterPro" id="IPR020588">
    <property type="entry name" value="RecA_ATP-bd"/>
</dbReference>
<dbReference type="PANTHER" id="PTHR46457">
    <property type="entry name" value="DNA REPAIR PROTEIN RAD51 HOMOLOG 4"/>
    <property type="match status" value="1"/>
</dbReference>
<dbReference type="PANTHER" id="PTHR46457:SF1">
    <property type="entry name" value="DNA REPAIR PROTEIN RAD51 HOMOLOG 4"/>
    <property type="match status" value="1"/>
</dbReference>
<dbReference type="Pfam" id="PF08423">
    <property type="entry name" value="Rad51"/>
    <property type="match status" value="1"/>
</dbReference>
<dbReference type="Pfam" id="PF21794">
    <property type="entry name" value="RAD51D_N"/>
    <property type="match status" value="1"/>
</dbReference>
<dbReference type="PIRSF" id="PIRSF005856">
    <property type="entry name" value="Rad51"/>
    <property type="match status" value="1"/>
</dbReference>
<dbReference type="SMART" id="SM00382">
    <property type="entry name" value="AAA"/>
    <property type="match status" value="1"/>
</dbReference>
<dbReference type="SUPFAM" id="SSF52540">
    <property type="entry name" value="P-loop containing nucleoside triphosphate hydrolases"/>
    <property type="match status" value="1"/>
</dbReference>
<dbReference type="PROSITE" id="PS50162">
    <property type="entry name" value="RECA_2"/>
    <property type="match status" value="1"/>
</dbReference>
<keyword id="KW-0067">ATP-binding</keyword>
<keyword id="KW-0227">DNA damage</keyword>
<keyword id="KW-0233">DNA recombination</keyword>
<keyword id="KW-0234">DNA repair</keyword>
<keyword id="KW-0238">DNA-binding</keyword>
<keyword id="KW-0547">Nucleotide-binding</keyword>
<keyword id="KW-0539">Nucleus</keyword>
<keyword id="KW-1185">Reference proteome</keyword>